<organism>
    <name type="scientific">Schizosaccharomyces pombe (strain 972 / ATCC 24843)</name>
    <name type="common">Fission yeast</name>
    <dbReference type="NCBI Taxonomy" id="284812"/>
    <lineage>
        <taxon>Eukaryota</taxon>
        <taxon>Fungi</taxon>
        <taxon>Dikarya</taxon>
        <taxon>Ascomycota</taxon>
        <taxon>Taphrinomycotina</taxon>
        <taxon>Schizosaccharomycetes</taxon>
        <taxon>Schizosaccharomycetales</taxon>
        <taxon>Schizosaccharomycetaceae</taxon>
        <taxon>Schizosaccharomyces</taxon>
    </lineage>
</organism>
<name>TTI2_SCHPO</name>
<gene>
    <name evidence="5" type="primary">tti2</name>
    <name type="ORF">SPBC1604.17c</name>
</gene>
<dbReference type="EMBL" id="CU329671">
    <property type="protein sequence ID" value="CAA22350.3"/>
    <property type="molecule type" value="Genomic_DNA"/>
</dbReference>
<dbReference type="PIR" id="T39497">
    <property type="entry name" value="T39497"/>
</dbReference>
<dbReference type="RefSeq" id="NP_596623.3">
    <property type="nucleotide sequence ID" value="NM_001022544.3"/>
</dbReference>
<dbReference type="BioGRID" id="276322">
    <property type="interactions" value="12"/>
</dbReference>
<dbReference type="FunCoup" id="O94729">
    <property type="interactions" value="25"/>
</dbReference>
<dbReference type="IntAct" id="O94729">
    <property type="interactions" value="2"/>
</dbReference>
<dbReference type="MINT" id="O94729"/>
<dbReference type="STRING" id="284812.O94729"/>
<dbReference type="PaxDb" id="4896-SPBC1604.17c.1"/>
<dbReference type="EnsemblFungi" id="SPBC1604.17c.1">
    <property type="protein sequence ID" value="SPBC1604.17c.1:pep"/>
    <property type="gene ID" value="SPBC1604.17c"/>
</dbReference>
<dbReference type="GeneID" id="2539771"/>
<dbReference type="KEGG" id="spo:2539771"/>
<dbReference type="PomBase" id="SPBC1604.17c">
    <property type="gene designation" value="tti2"/>
</dbReference>
<dbReference type="VEuPathDB" id="FungiDB:SPBC1604.17c"/>
<dbReference type="HOGENOM" id="CLU_604320_0_0_1"/>
<dbReference type="InParanoid" id="O94729"/>
<dbReference type="OMA" id="YRISSHH"/>
<dbReference type="PhylomeDB" id="O94729"/>
<dbReference type="PRO" id="PR:O94729"/>
<dbReference type="Proteomes" id="UP000002485">
    <property type="component" value="Chromosome II"/>
</dbReference>
<dbReference type="GO" id="GO:0005829">
    <property type="term" value="C:cytosol"/>
    <property type="evidence" value="ECO:0007005"/>
    <property type="project" value="PomBase"/>
</dbReference>
<dbReference type="GO" id="GO:0005634">
    <property type="term" value="C:nucleus"/>
    <property type="evidence" value="ECO:0007005"/>
    <property type="project" value="PomBase"/>
</dbReference>
<dbReference type="GO" id="GO:0110078">
    <property type="term" value="C:TTT Hsp90 cochaperone complex"/>
    <property type="evidence" value="ECO:0000314"/>
    <property type="project" value="PomBase"/>
</dbReference>
<dbReference type="GO" id="GO:0030674">
    <property type="term" value="F:protein-macromolecule adaptor activity"/>
    <property type="evidence" value="ECO:0000315"/>
    <property type="project" value="PomBase"/>
</dbReference>
<dbReference type="GO" id="GO:0051083">
    <property type="term" value="P:'de novo' cotranslational protein folding"/>
    <property type="evidence" value="ECO:0000269"/>
    <property type="project" value="PomBase"/>
</dbReference>
<dbReference type="GO" id="GO:0006325">
    <property type="term" value="P:chromatin organization"/>
    <property type="evidence" value="ECO:0007669"/>
    <property type="project" value="UniProtKB-KW"/>
</dbReference>
<dbReference type="InterPro" id="IPR018870">
    <property type="entry name" value="Tti2"/>
</dbReference>
<dbReference type="PANTHER" id="PTHR32226">
    <property type="entry name" value="TELO2-INTERACTING PROTEIN 2"/>
    <property type="match status" value="1"/>
</dbReference>
<dbReference type="PANTHER" id="PTHR32226:SF2">
    <property type="entry name" value="TELO2-INTERACTING PROTEIN 2"/>
    <property type="match status" value="1"/>
</dbReference>
<dbReference type="Pfam" id="PF10521">
    <property type="entry name" value="Tti2"/>
    <property type="match status" value="1"/>
</dbReference>
<proteinExistence type="evidence at protein level"/>
<evidence type="ECO:0000250" key="1">
    <source>
        <dbReference type="UniProtKB" id="P47168"/>
    </source>
</evidence>
<evidence type="ECO:0000250" key="2">
    <source>
        <dbReference type="UniProtKB" id="Q6NXR4"/>
    </source>
</evidence>
<evidence type="ECO:0000269" key="3">
    <source>
    </source>
</evidence>
<evidence type="ECO:0000269" key="4">
    <source>
    </source>
</evidence>
<evidence type="ECO:0000303" key="5">
    <source>
    </source>
</evidence>
<evidence type="ECO:0000305" key="6"/>
<evidence type="ECO:0000305" key="7">
    <source>
    </source>
</evidence>
<accession>O94729</accession>
<protein>
    <recommendedName>
        <fullName evidence="5">Tel2-interacting protein 2</fullName>
    </recommendedName>
</protein>
<keyword id="KW-0156">Chromatin regulator</keyword>
<keyword id="KW-0175">Coiled coil</keyword>
<keyword id="KW-0539">Nucleus</keyword>
<keyword id="KW-1185">Reference proteome</keyword>
<comment type="function">
    <text evidence="1 2 3 4">Component of the tel2-tti1-tti2 (TTT) complex that stabilizes protein levels of the phosphatidylinositol 3-kinase-related protein kinase (PIKK) family proteins (PubMed:27935167, PubMed:31332096). The TTT complex is involved in the cellular resistance to DNA damage stresses, like ionizing radiation (IR), ultraviolet (UV) and mitomycin C (MMC) (By similarity). Component of the ASTRA complex involved in chromatin remodeling (By similarity).</text>
</comment>
<comment type="subunit">
    <text evidence="1 3 4">Component of the TTT complex composed of tel2, tti1 and tti2 (PubMed:27935167, PubMed:31332096). Interacts with tel2 and ttiI1 (PubMed:27935167, PubMed:31332096). Component of the ASTRA complex composed of at least rvb1, rvb2, tra1, tel2, tti1 and tti2 (By similarity).</text>
</comment>
<comment type="subcellular location">
    <subcellularLocation>
        <location evidence="7">Nucleus</location>
    </subcellularLocation>
</comment>
<comment type="similarity">
    <text evidence="6">Belongs to the TTI2 family.</text>
</comment>
<reference key="1">
    <citation type="journal article" date="2002" name="Nature">
        <title>The genome sequence of Schizosaccharomyces pombe.</title>
        <authorList>
            <person name="Wood V."/>
            <person name="Gwilliam R."/>
            <person name="Rajandream M.A."/>
            <person name="Lyne M.H."/>
            <person name="Lyne R."/>
            <person name="Stewart A."/>
            <person name="Sgouros J.G."/>
            <person name="Peat N."/>
            <person name="Hayles J."/>
            <person name="Baker S.G."/>
            <person name="Basham D."/>
            <person name="Bowman S."/>
            <person name="Brooks K."/>
            <person name="Brown D."/>
            <person name="Brown S."/>
            <person name="Chillingworth T."/>
            <person name="Churcher C.M."/>
            <person name="Collins M."/>
            <person name="Connor R."/>
            <person name="Cronin A."/>
            <person name="Davis P."/>
            <person name="Feltwell T."/>
            <person name="Fraser A."/>
            <person name="Gentles S."/>
            <person name="Goble A."/>
            <person name="Hamlin N."/>
            <person name="Harris D.E."/>
            <person name="Hidalgo J."/>
            <person name="Hodgson G."/>
            <person name="Holroyd S."/>
            <person name="Hornsby T."/>
            <person name="Howarth S."/>
            <person name="Huckle E.J."/>
            <person name="Hunt S."/>
            <person name="Jagels K."/>
            <person name="James K.D."/>
            <person name="Jones L."/>
            <person name="Jones M."/>
            <person name="Leather S."/>
            <person name="McDonald S."/>
            <person name="McLean J."/>
            <person name="Mooney P."/>
            <person name="Moule S."/>
            <person name="Mungall K.L."/>
            <person name="Murphy L.D."/>
            <person name="Niblett D."/>
            <person name="Odell C."/>
            <person name="Oliver K."/>
            <person name="O'Neil S."/>
            <person name="Pearson D."/>
            <person name="Quail M.A."/>
            <person name="Rabbinowitsch E."/>
            <person name="Rutherford K.M."/>
            <person name="Rutter S."/>
            <person name="Saunders D."/>
            <person name="Seeger K."/>
            <person name="Sharp S."/>
            <person name="Skelton J."/>
            <person name="Simmonds M.N."/>
            <person name="Squares R."/>
            <person name="Squares S."/>
            <person name="Stevens K."/>
            <person name="Taylor K."/>
            <person name="Taylor R.G."/>
            <person name="Tivey A."/>
            <person name="Walsh S.V."/>
            <person name="Warren T."/>
            <person name="Whitehead S."/>
            <person name="Woodward J.R."/>
            <person name="Volckaert G."/>
            <person name="Aert R."/>
            <person name="Robben J."/>
            <person name="Grymonprez B."/>
            <person name="Weltjens I."/>
            <person name="Vanstreels E."/>
            <person name="Rieger M."/>
            <person name="Schaefer M."/>
            <person name="Mueller-Auer S."/>
            <person name="Gabel C."/>
            <person name="Fuchs M."/>
            <person name="Duesterhoeft A."/>
            <person name="Fritzc C."/>
            <person name="Holzer E."/>
            <person name="Moestl D."/>
            <person name="Hilbert H."/>
            <person name="Borzym K."/>
            <person name="Langer I."/>
            <person name="Beck A."/>
            <person name="Lehrach H."/>
            <person name="Reinhardt R."/>
            <person name="Pohl T.M."/>
            <person name="Eger P."/>
            <person name="Zimmermann W."/>
            <person name="Wedler H."/>
            <person name="Wambutt R."/>
            <person name="Purnelle B."/>
            <person name="Goffeau A."/>
            <person name="Cadieu E."/>
            <person name="Dreano S."/>
            <person name="Gloux S."/>
            <person name="Lelaure V."/>
            <person name="Mottier S."/>
            <person name="Galibert F."/>
            <person name="Aves S.J."/>
            <person name="Xiang Z."/>
            <person name="Hunt C."/>
            <person name="Moore K."/>
            <person name="Hurst S.M."/>
            <person name="Lucas M."/>
            <person name="Rochet M."/>
            <person name="Gaillardin C."/>
            <person name="Tallada V.A."/>
            <person name="Garzon A."/>
            <person name="Thode G."/>
            <person name="Daga R.R."/>
            <person name="Cruzado L."/>
            <person name="Jimenez J."/>
            <person name="Sanchez M."/>
            <person name="del Rey F."/>
            <person name="Benito J."/>
            <person name="Dominguez A."/>
            <person name="Revuelta J.L."/>
            <person name="Moreno S."/>
            <person name="Armstrong J."/>
            <person name="Forsburg S.L."/>
            <person name="Cerutti L."/>
            <person name="Lowe T."/>
            <person name="McCombie W.R."/>
            <person name="Paulsen I."/>
            <person name="Potashkin J."/>
            <person name="Shpakovski G.V."/>
            <person name="Ussery D."/>
            <person name="Barrell B.G."/>
            <person name="Nurse P."/>
        </authorList>
    </citation>
    <scope>NUCLEOTIDE SEQUENCE [LARGE SCALE GENOMIC DNA]</scope>
    <source>
        <strain>972 / ATCC 24843</strain>
    </source>
</reference>
<reference key="2">
    <citation type="journal article" date="2017" name="Genes Cells">
        <title>CK2 phospho-independent assembly of the Tel2-associated stress-signaling complexes in Schizosaccharomyces pombe.</title>
        <authorList>
            <person name="Inoue H."/>
            <person name="Sugimoto S."/>
            <person name="Takeshita Y."/>
            <person name="Takeuchi M."/>
            <person name="Hatanaka M."/>
            <person name="Nagao K."/>
            <person name="Hayashi T."/>
            <person name="Kokubu A."/>
            <person name="Yanagida M."/>
            <person name="Kanoh J."/>
        </authorList>
    </citation>
    <scope>FUNCTION</scope>
    <scope>SUBUNIT</scope>
    <scope>INTERACTION WITH TTI1 AND TEL2</scope>
</reference>
<reference key="3">
    <citation type="journal article" date="2019" name="Mol. Cell. Biol.">
        <title>A tel2 mutation that destabilizes the Tel2-Tti1-Tti2 complex eliminates Rad3ATR kinase signaling in the DNA replication checkpoint and leads to telomere shortening in fission yeast.</title>
        <authorList>
            <person name="Xu Y.J."/>
            <person name="Khan S."/>
            <person name="Didier A.C."/>
            <person name="Wozniak M."/>
            <person name="Liu Y."/>
            <person name="Singh A."/>
            <person name="Nakamura T.M."/>
        </authorList>
    </citation>
    <scope>FUNCTION</scope>
    <scope>SUBUNIT</scope>
    <scope>INTERACTION WITH TTI1 AND TEL2</scope>
</reference>
<feature type="chain" id="PRO_0000116753" description="Tel2-interacting protein 2">
    <location>
        <begin position="1"/>
        <end position="467"/>
    </location>
</feature>
<feature type="coiled-coil region" evidence="6">
    <location>
        <begin position="4"/>
        <end position="45"/>
    </location>
</feature>
<sequence length="467" mass="54326">MQYYKELARRLHTLQSKNEKEALEKQIDFLDKLVVEVDSLVHEQDLRPLLEFISPTESWFLLGTATIFYIKLLTHPDPESIDVVIKEAYVVRAHRILSIFQEQFIENVVKEINWEILAILISLSGIENGLVRNLSEFLSTSILSAVPRQKFLLYLLEKYQINLFHREERLTDQGRPVAFELPPDKFHSDQSKALLEPKWKTKNYLISHLIFWIIDQQSSSSIEVCWHRIIPSVLRILNDLSPNIKLQGIELVNRLLKITEREFLLYTGILKILKDDLLVFYTFIPPRFTIQTSVTLINASFATLVSLYPEENENLNSIMLNGINSVFQFAFDYPLILQAAFSQIMVLTDKMNVSYLPYLTLTLDELCRIIQNPQIIQIPSTLSFFLEILTKLLEIYSYRISAHHVELLMALVVCSRNYMRCNLQEHHNAIVQALQNLFTLIKLNITVEQLGDYNVILPLLEPLQIPL</sequence>